<gene>
    <name type="primary">yocS</name>
    <name type="ordered locus">BSU19350</name>
</gene>
<reference key="1">
    <citation type="submission" date="1997-10" db="EMBL/GenBank/DDBJ databases">
        <title>Sequence analysis of the Bacillus subtilis chromosome region between the terC and odhAB loci cloned in a yeast artificial chromosome.</title>
        <authorList>
            <person name="Lapidus A."/>
            <person name="Galleron N."/>
            <person name="Sorokin A."/>
            <person name="Ehrlich S.D."/>
        </authorList>
    </citation>
    <scope>NUCLEOTIDE SEQUENCE [GENOMIC DNA]</scope>
</reference>
<reference key="2">
    <citation type="journal article" date="1997" name="Nature">
        <title>The complete genome sequence of the Gram-positive bacterium Bacillus subtilis.</title>
        <authorList>
            <person name="Kunst F."/>
            <person name="Ogasawara N."/>
            <person name="Moszer I."/>
            <person name="Albertini A.M."/>
            <person name="Alloni G."/>
            <person name="Azevedo V."/>
            <person name="Bertero M.G."/>
            <person name="Bessieres P."/>
            <person name="Bolotin A."/>
            <person name="Borchert S."/>
            <person name="Borriss R."/>
            <person name="Boursier L."/>
            <person name="Brans A."/>
            <person name="Braun M."/>
            <person name="Brignell S.C."/>
            <person name="Bron S."/>
            <person name="Brouillet S."/>
            <person name="Bruschi C.V."/>
            <person name="Caldwell B."/>
            <person name="Capuano V."/>
            <person name="Carter N.M."/>
            <person name="Choi S.-K."/>
            <person name="Codani J.-J."/>
            <person name="Connerton I.F."/>
            <person name="Cummings N.J."/>
            <person name="Daniel R.A."/>
            <person name="Denizot F."/>
            <person name="Devine K.M."/>
            <person name="Duesterhoeft A."/>
            <person name="Ehrlich S.D."/>
            <person name="Emmerson P.T."/>
            <person name="Entian K.-D."/>
            <person name="Errington J."/>
            <person name="Fabret C."/>
            <person name="Ferrari E."/>
            <person name="Foulger D."/>
            <person name="Fritz C."/>
            <person name="Fujita M."/>
            <person name="Fujita Y."/>
            <person name="Fuma S."/>
            <person name="Galizzi A."/>
            <person name="Galleron N."/>
            <person name="Ghim S.-Y."/>
            <person name="Glaser P."/>
            <person name="Goffeau A."/>
            <person name="Golightly E.J."/>
            <person name="Grandi G."/>
            <person name="Guiseppi G."/>
            <person name="Guy B.J."/>
            <person name="Haga K."/>
            <person name="Haiech J."/>
            <person name="Harwood C.R."/>
            <person name="Henaut A."/>
            <person name="Hilbert H."/>
            <person name="Holsappel S."/>
            <person name="Hosono S."/>
            <person name="Hullo M.-F."/>
            <person name="Itaya M."/>
            <person name="Jones L.-M."/>
            <person name="Joris B."/>
            <person name="Karamata D."/>
            <person name="Kasahara Y."/>
            <person name="Klaerr-Blanchard M."/>
            <person name="Klein C."/>
            <person name="Kobayashi Y."/>
            <person name="Koetter P."/>
            <person name="Koningstein G."/>
            <person name="Krogh S."/>
            <person name="Kumano M."/>
            <person name="Kurita K."/>
            <person name="Lapidus A."/>
            <person name="Lardinois S."/>
            <person name="Lauber J."/>
            <person name="Lazarevic V."/>
            <person name="Lee S.-M."/>
            <person name="Levine A."/>
            <person name="Liu H."/>
            <person name="Masuda S."/>
            <person name="Mauel C."/>
            <person name="Medigue C."/>
            <person name="Medina N."/>
            <person name="Mellado R.P."/>
            <person name="Mizuno M."/>
            <person name="Moestl D."/>
            <person name="Nakai S."/>
            <person name="Noback M."/>
            <person name="Noone D."/>
            <person name="O'Reilly M."/>
            <person name="Ogawa K."/>
            <person name="Ogiwara A."/>
            <person name="Oudega B."/>
            <person name="Park S.-H."/>
            <person name="Parro V."/>
            <person name="Pohl T.M."/>
            <person name="Portetelle D."/>
            <person name="Porwollik S."/>
            <person name="Prescott A.M."/>
            <person name="Presecan E."/>
            <person name="Pujic P."/>
            <person name="Purnelle B."/>
            <person name="Rapoport G."/>
            <person name="Rey M."/>
            <person name="Reynolds S."/>
            <person name="Rieger M."/>
            <person name="Rivolta C."/>
            <person name="Rocha E."/>
            <person name="Roche B."/>
            <person name="Rose M."/>
            <person name="Sadaie Y."/>
            <person name="Sato T."/>
            <person name="Scanlan E."/>
            <person name="Schleich S."/>
            <person name="Schroeter R."/>
            <person name="Scoffone F."/>
            <person name="Sekiguchi J."/>
            <person name="Sekowska A."/>
            <person name="Seror S.J."/>
            <person name="Serror P."/>
            <person name="Shin B.-S."/>
            <person name="Soldo B."/>
            <person name="Sorokin A."/>
            <person name="Tacconi E."/>
            <person name="Takagi T."/>
            <person name="Takahashi H."/>
            <person name="Takemaru K."/>
            <person name="Takeuchi M."/>
            <person name="Tamakoshi A."/>
            <person name="Tanaka T."/>
            <person name="Terpstra P."/>
            <person name="Tognoni A."/>
            <person name="Tosato V."/>
            <person name="Uchiyama S."/>
            <person name="Vandenbol M."/>
            <person name="Vannier F."/>
            <person name="Vassarotti A."/>
            <person name="Viari A."/>
            <person name="Wambutt R."/>
            <person name="Wedler E."/>
            <person name="Wedler H."/>
            <person name="Weitzenegger T."/>
            <person name="Winters P."/>
            <person name="Wipat A."/>
            <person name="Yamamoto H."/>
            <person name="Yamane K."/>
            <person name="Yasumoto K."/>
            <person name="Yata K."/>
            <person name="Yoshida K."/>
            <person name="Yoshikawa H.-F."/>
            <person name="Zumstein E."/>
            <person name="Yoshikawa H."/>
            <person name="Danchin A."/>
        </authorList>
    </citation>
    <scope>NUCLEOTIDE SEQUENCE [LARGE SCALE GENOMIC DNA]</scope>
    <source>
        <strain>168</strain>
    </source>
</reference>
<sequence>MDIIRKISHFAGQTFGIWVIVFAVLGFSFPSLFTWISSYITIFLGIIMFGMGLTLQADDFKELVRKPWQVIIGVIAQYTIMPLVAFGLAFGLHLPAEIAVGVILVGCCPGGTASNVMTFLAKGNTALSVAVTTISTLLAPVVTPLLIMLFAKEWLPVSPGSLFISILQAVLFPIIAGLIVKMFFRKQVAKAVHALPLVSVIGIVAIVSAVVSGNRENLLQSGLLIFSVVILHNGIGYLLGFLCAKLLKMDYPSQKAIAIEVGMQNSGLGAALATAHFSPLSAVPSAIFSVWHNLSGSMLATYWSKKVKKKQAGSKSSNLSL</sequence>
<protein>
    <recommendedName>
        <fullName>Uncharacterized sodium-dependent transporter YocS</fullName>
    </recommendedName>
</protein>
<keyword id="KW-1003">Cell membrane</keyword>
<keyword id="KW-0406">Ion transport</keyword>
<keyword id="KW-0472">Membrane</keyword>
<keyword id="KW-1185">Reference proteome</keyword>
<keyword id="KW-0915">Sodium</keyword>
<keyword id="KW-0739">Sodium transport</keyword>
<keyword id="KW-0769">Symport</keyword>
<keyword id="KW-0812">Transmembrane</keyword>
<keyword id="KW-1133">Transmembrane helix</keyword>
<keyword id="KW-0813">Transport</keyword>
<comment type="subcellular location">
    <subcellularLocation>
        <location evidence="2">Cell membrane</location>
        <topology evidence="2">Multi-pass membrane protein</topology>
    </subcellularLocation>
</comment>
<comment type="similarity">
    <text evidence="2">Belongs to the bile acid:sodium symporter (BASS) (TC 2.A.28) family.</text>
</comment>
<dbReference type="EMBL" id="AF027868">
    <property type="protein sequence ID" value="AAB84443.1"/>
    <property type="molecule type" value="Genomic_DNA"/>
</dbReference>
<dbReference type="EMBL" id="AL009126">
    <property type="protein sequence ID" value="CAB13827.1"/>
    <property type="molecule type" value="Genomic_DNA"/>
</dbReference>
<dbReference type="PIR" id="E69902">
    <property type="entry name" value="E69902"/>
</dbReference>
<dbReference type="RefSeq" id="NP_389817.1">
    <property type="nucleotide sequence ID" value="NC_000964.3"/>
</dbReference>
<dbReference type="RefSeq" id="WP_004399225.1">
    <property type="nucleotide sequence ID" value="NZ_OZ025638.1"/>
</dbReference>
<dbReference type="SMR" id="O34524"/>
<dbReference type="FunCoup" id="O34524">
    <property type="interactions" value="94"/>
</dbReference>
<dbReference type="STRING" id="224308.BSU19350"/>
<dbReference type="PaxDb" id="224308-BSU19350"/>
<dbReference type="DNASU" id="939452"/>
<dbReference type="EnsemblBacteria" id="CAB13827">
    <property type="protein sequence ID" value="CAB13827"/>
    <property type="gene ID" value="BSU_19350"/>
</dbReference>
<dbReference type="GeneID" id="939452"/>
<dbReference type="KEGG" id="bsu:BSU19350"/>
<dbReference type="PATRIC" id="fig|224308.179.peg.2116"/>
<dbReference type="eggNOG" id="COG0385">
    <property type="taxonomic scope" value="Bacteria"/>
</dbReference>
<dbReference type="InParanoid" id="O34524"/>
<dbReference type="OrthoDB" id="9806785at2"/>
<dbReference type="PhylomeDB" id="O34524"/>
<dbReference type="BioCyc" id="BSUB:BSU19350-MONOMER"/>
<dbReference type="Proteomes" id="UP000001570">
    <property type="component" value="Chromosome"/>
</dbReference>
<dbReference type="GO" id="GO:0005886">
    <property type="term" value="C:plasma membrane"/>
    <property type="evidence" value="ECO:0007669"/>
    <property type="project" value="UniProtKB-SubCell"/>
</dbReference>
<dbReference type="GO" id="GO:0015293">
    <property type="term" value="F:symporter activity"/>
    <property type="evidence" value="ECO:0007669"/>
    <property type="project" value="UniProtKB-KW"/>
</dbReference>
<dbReference type="GO" id="GO:0006814">
    <property type="term" value="P:sodium ion transport"/>
    <property type="evidence" value="ECO:0007669"/>
    <property type="project" value="UniProtKB-KW"/>
</dbReference>
<dbReference type="Gene3D" id="1.20.1530.20">
    <property type="match status" value="1"/>
</dbReference>
<dbReference type="InterPro" id="IPR002657">
    <property type="entry name" value="BilAc:Na_symport/Acr3"/>
</dbReference>
<dbReference type="InterPro" id="IPR004710">
    <property type="entry name" value="Bilac:Na_transpt"/>
</dbReference>
<dbReference type="InterPro" id="IPR038770">
    <property type="entry name" value="Na+/solute_symporter_sf"/>
</dbReference>
<dbReference type="NCBIfam" id="TIGR00841">
    <property type="entry name" value="bass"/>
    <property type="match status" value="1"/>
</dbReference>
<dbReference type="PANTHER" id="PTHR10361:SF28">
    <property type="entry name" value="P3 PROTEIN-RELATED"/>
    <property type="match status" value="1"/>
</dbReference>
<dbReference type="PANTHER" id="PTHR10361">
    <property type="entry name" value="SODIUM-BILE ACID COTRANSPORTER"/>
    <property type="match status" value="1"/>
</dbReference>
<dbReference type="Pfam" id="PF01758">
    <property type="entry name" value="SBF"/>
    <property type="match status" value="1"/>
</dbReference>
<evidence type="ECO:0000255" key="1"/>
<evidence type="ECO:0000305" key="2"/>
<feature type="chain" id="PRO_0000360421" description="Uncharacterized sodium-dependent transporter YocS">
    <location>
        <begin position="1"/>
        <end position="321"/>
    </location>
</feature>
<feature type="topological domain" description="Extracellular" evidence="1">
    <location>
        <begin position="1"/>
        <end position="6"/>
    </location>
</feature>
<feature type="transmembrane region" description="Helical" evidence="1">
    <location>
        <begin position="7"/>
        <end position="29"/>
    </location>
</feature>
<feature type="topological domain" description="Cytoplasmic" evidence="1">
    <location>
        <begin position="30"/>
        <end position="34"/>
    </location>
</feature>
<feature type="transmembrane region" description="Helical" evidence="1">
    <location>
        <begin position="35"/>
        <end position="57"/>
    </location>
</feature>
<feature type="topological domain" description="Extracellular" evidence="1">
    <location>
        <begin position="58"/>
        <end position="69"/>
    </location>
</feature>
<feature type="transmembrane region" description="Helical" evidence="1">
    <location>
        <begin position="70"/>
        <end position="92"/>
    </location>
</feature>
<feature type="topological domain" description="Cytoplasmic" evidence="1">
    <location>
        <begin position="93"/>
        <end position="97"/>
    </location>
</feature>
<feature type="transmembrane region" description="Helical" evidence="1">
    <location>
        <begin position="98"/>
        <end position="120"/>
    </location>
</feature>
<feature type="topological domain" description="Extracellular" evidence="1">
    <location>
        <begin position="121"/>
        <end position="129"/>
    </location>
</feature>
<feature type="transmembrane region" description="Helical" evidence="1">
    <location>
        <begin position="130"/>
        <end position="150"/>
    </location>
</feature>
<feature type="topological domain" description="Cytoplasmic" evidence="1">
    <location>
        <begin position="151"/>
        <end position="159"/>
    </location>
</feature>
<feature type="transmembrane region" description="Helical" evidence="1">
    <location>
        <begin position="160"/>
        <end position="180"/>
    </location>
</feature>
<feature type="topological domain" description="Extracellular" evidence="1">
    <location>
        <begin position="181"/>
        <end position="190"/>
    </location>
</feature>
<feature type="transmembrane region" description="Helical" evidence="1">
    <location>
        <begin position="191"/>
        <end position="211"/>
    </location>
</feature>
<feature type="topological domain" description="Cytoplasmic" evidence="1">
    <location>
        <begin position="212"/>
        <end position="221"/>
    </location>
</feature>
<feature type="transmembrane region" description="Helical" evidence="1">
    <location>
        <begin position="222"/>
        <end position="242"/>
    </location>
</feature>
<feature type="topological domain" description="Extracellular" evidence="1">
    <location>
        <begin position="243"/>
        <end position="267"/>
    </location>
</feature>
<feature type="transmembrane region" description="Helical" evidence="1">
    <location>
        <begin position="268"/>
        <end position="288"/>
    </location>
</feature>
<feature type="topological domain" description="Cytoplasmic" evidence="1">
    <location>
        <begin position="289"/>
        <end position="321"/>
    </location>
</feature>
<name>YOCS_BACSU</name>
<organism>
    <name type="scientific">Bacillus subtilis (strain 168)</name>
    <dbReference type="NCBI Taxonomy" id="224308"/>
    <lineage>
        <taxon>Bacteria</taxon>
        <taxon>Bacillati</taxon>
        <taxon>Bacillota</taxon>
        <taxon>Bacilli</taxon>
        <taxon>Bacillales</taxon>
        <taxon>Bacillaceae</taxon>
        <taxon>Bacillus</taxon>
    </lineage>
</organism>
<accession>O34524</accession>
<accession>Q796C1</accession>
<proteinExistence type="inferred from homology"/>